<comment type="function">
    <text evidence="1">Required for insertion of 4Fe-4S clusters for at least IspG.</text>
</comment>
<comment type="cofactor">
    <cofactor evidence="1">
        <name>iron-sulfur cluster</name>
        <dbReference type="ChEBI" id="CHEBI:30408"/>
    </cofactor>
    <text evidence="1">Binds 1 iron-sulfur cluster per subunit.</text>
</comment>
<comment type="subunit">
    <text evidence="1">Homodimer.</text>
</comment>
<comment type="similarity">
    <text evidence="1">Belongs to the HesB/IscA family.</text>
</comment>
<comment type="sequence caution" evidence="2">
    <conflict type="erroneous initiation">
        <sequence resource="EMBL-CDS" id="ABS76985"/>
    </conflict>
</comment>
<reference key="1">
    <citation type="journal article" date="2009" name="Infect. Immun.">
        <title>Comparative genomics reveal extensive transposon-mediated genomic plasticity and diversity among potential effector proteins within the genus Coxiella.</title>
        <authorList>
            <person name="Beare P.A."/>
            <person name="Unsworth N."/>
            <person name="Andoh M."/>
            <person name="Voth D.E."/>
            <person name="Omsland A."/>
            <person name="Gilk S.D."/>
            <person name="Williams K.P."/>
            <person name="Sobral B.W."/>
            <person name="Kupko J.J. III"/>
            <person name="Porcella S.F."/>
            <person name="Samuel J.E."/>
            <person name="Heinzen R.A."/>
        </authorList>
    </citation>
    <scope>NUCLEOTIDE SEQUENCE [LARGE SCALE GENOMIC DNA]</scope>
    <source>
        <strain>Dugway 5J108-111</strain>
    </source>
</reference>
<feature type="chain" id="PRO_1000087296" description="Iron-sulfur cluster insertion protein ErpA">
    <location>
        <begin position="1"/>
        <end position="134"/>
    </location>
</feature>
<feature type="binding site" evidence="1">
    <location>
        <position position="47"/>
    </location>
    <ligand>
        <name>iron-sulfur cluster</name>
        <dbReference type="ChEBI" id="CHEBI:30408"/>
    </ligand>
</feature>
<feature type="binding site" evidence="1">
    <location>
        <position position="126"/>
    </location>
    <ligand>
        <name>iron-sulfur cluster</name>
        <dbReference type="ChEBI" id="CHEBI:30408"/>
    </ligand>
</feature>
<feature type="binding site" evidence="1">
    <location>
        <position position="128"/>
    </location>
    <ligand>
        <name>iron-sulfur cluster</name>
        <dbReference type="ChEBI" id="CHEBI:30408"/>
    </ligand>
</feature>
<organism>
    <name type="scientific">Coxiella burnetii (strain Dugway 5J108-111)</name>
    <dbReference type="NCBI Taxonomy" id="434922"/>
    <lineage>
        <taxon>Bacteria</taxon>
        <taxon>Pseudomonadati</taxon>
        <taxon>Pseudomonadota</taxon>
        <taxon>Gammaproteobacteria</taxon>
        <taxon>Legionellales</taxon>
        <taxon>Coxiellaceae</taxon>
        <taxon>Coxiella</taxon>
    </lineage>
</organism>
<evidence type="ECO:0000255" key="1">
    <source>
        <dbReference type="HAMAP-Rule" id="MF_01380"/>
    </source>
</evidence>
<evidence type="ECO:0000305" key="2"/>
<name>ERPA_COXBN</name>
<accession>A9KB96</accession>
<keyword id="KW-0408">Iron</keyword>
<keyword id="KW-0411">Iron-sulfur</keyword>
<keyword id="KW-0479">Metal-binding</keyword>
<protein>
    <recommendedName>
        <fullName evidence="1">Iron-sulfur cluster insertion protein ErpA</fullName>
    </recommendedName>
</protein>
<proteinExistence type="inferred from homology"/>
<sequence>MNALAQKTPSPPTLVFTEAAARKVKGLIDEENNPYLNLRVFITGGGCSGFQYGFTFDEAINSDDLVIEKQLEEEDDDEGGTGQMALVKLLVDPLSLQYLQGAEIDYHEDVSGAQFVIRNPNAKTTCGCGSSFAA</sequence>
<dbReference type="EMBL" id="CP000733">
    <property type="protein sequence ID" value="ABS76985.2"/>
    <property type="status" value="ALT_INIT"/>
    <property type="molecule type" value="Genomic_DNA"/>
</dbReference>
<dbReference type="SMR" id="A9KB96"/>
<dbReference type="KEGG" id="cbd:CBUD_0109"/>
<dbReference type="HOGENOM" id="CLU_069054_5_3_6"/>
<dbReference type="Proteomes" id="UP000008555">
    <property type="component" value="Chromosome"/>
</dbReference>
<dbReference type="GO" id="GO:0005829">
    <property type="term" value="C:cytosol"/>
    <property type="evidence" value="ECO:0007669"/>
    <property type="project" value="TreeGrafter"/>
</dbReference>
<dbReference type="GO" id="GO:0051537">
    <property type="term" value="F:2 iron, 2 sulfur cluster binding"/>
    <property type="evidence" value="ECO:0007669"/>
    <property type="project" value="UniProtKB-ARBA"/>
</dbReference>
<dbReference type="GO" id="GO:0051539">
    <property type="term" value="F:4 iron, 4 sulfur cluster binding"/>
    <property type="evidence" value="ECO:0007669"/>
    <property type="project" value="TreeGrafter"/>
</dbReference>
<dbReference type="GO" id="GO:0005506">
    <property type="term" value="F:iron ion binding"/>
    <property type="evidence" value="ECO:0007669"/>
    <property type="project" value="UniProtKB-UniRule"/>
</dbReference>
<dbReference type="GO" id="GO:0016226">
    <property type="term" value="P:iron-sulfur cluster assembly"/>
    <property type="evidence" value="ECO:0007669"/>
    <property type="project" value="UniProtKB-UniRule"/>
</dbReference>
<dbReference type="FunFam" id="2.60.300.12:FF:000002">
    <property type="entry name" value="Iron-sulfur cluster insertion protein ErpA"/>
    <property type="match status" value="1"/>
</dbReference>
<dbReference type="Gene3D" id="2.60.300.12">
    <property type="entry name" value="HesB-like domain"/>
    <property type="match status" value="1"/>
</dbReference>
<dbReference type="HAMAP" id="MF_01380">
    <property type="entry name" value="Fe_S_insert_ErpA"/>
    <property type="match status" value="1"/>
</dbReference>
<dbReference type="InterPro" id="IPR000361">
    <property type="entry name" value="FeS_biogenesis"/>
</dbReference>
<dbReference type="InterPro" id="IPR016092">
    <property type="entry name" value="FeS_cluster_insertion"/>
</dbReference>
<dbReference type="InterPro" id="IPR017870">
    <property type="entry name" value="FeS_cluster_insertion_CS"/>
</dbReference>
<dbReference type="InterPro" id="IPR023063">
    <property type="entry name" value="FeS_cluster_insertion_RrpA"/>
</dbReference>
<dbReference type="InterPro" id="IPR035903">
    <property type="entry name" value="HesB-like_dom_sf"/>
</dbReference>
<dbReference type="NCBIfam" id="TIGR00049">
    <property type="entry name" value="iron-sulfur cluster assembly accessory protein"/>
    <property type="match status" value="1"/>
</dbReference>
<dbReference type="NCBIfam" id="NF010147">
    <property type="entry name" value="PRK13623.1"/>
    <property type="match status" value="1"/>
</dbReference>
<dbReference type="PANTHER" id="PTHR43011">
    <property type="entry name" value="IRON-SULFUR CLUSTER ASSEMBLY 2 HOMOLOG, MITOCHONDRIAL"/>
    <property type="match status" value="1"/>
</dbReference>
<dbReference type="PANTHER" id="PTHR43011:SF1">
    <property type="entry name" value="IRON-SULFUR CLUSTER ASSEMBLY 2 HOMOLOG, MITOCHONDRIAL"/>
    <property type="match status" value="1"/>
</dbReference>
<dbReference type="Pfam" id="PF01521">
    <property type="entry name" value="Fe-S_biosyn"/>
    <property type="match status" value="1"/>
</dbReference>
<dbReference type="SUPFAM" id="SSF89360">
    <property type="entry name" value="HesB-like domain"/>
    <property type="match status" value="1"/>
</dbReference>
<dbReference type="PROSITE" id="PS01152">
    <property type="entry name" value="HESB"/>
    <property type="match status" value="1"/>
</dbReference>
<gene>
    <name evidence="1" type="primary">erpA</name>
    <name type="ordered locus">CBUD_0109</name>
</gene>